<name>AROE_ECOLU</name>
<comment type="function">
    <text evidence="1">Involved in the biosynthesis of the chorismate, which leads to the biosynthesis of aromatic amino acids. Catalyzes the reversible NADPH linked reduction of 3-dehydroshikimate (DHSA) to yield shikimate (SA).</text>
</comment>
<comment type="catalytic activity">
    <reaction evidence="1">
        <text>shikimate + NADP(+) = 3-dehydroshikimate + NADPH + H(+)</text>
        <dbReference type="Rhea" id="RHEA:17737"/>
        <dbReference type="ChEBI" id="CHEBI:15378"/>
        <dbReference type="ChEBI" id="CHEBI:16630"/>
        <dbReference type="ChEBI" id="CHEBI:36208"/>
        <dbReference type="ChEBI" id="CHEBI:57783"/>
        <dbReference type="ChEBI" id="CHEBI:58349"/>
        <dbReference type="EC" id="1.1.1.25"/>
    </reaction>
</comment>
<comment type="pathway">
    <text evidence="1">Metabolic intermediate biosynthesis; chorismate biosynthesis; chorismate from D-erythrose 4-phosphate and phosphoenolpyruvate: step 4/7.</text>
</comment>
<comment type="subunit">
    <text evidence="1">Homodimer.</text>
</comment>
<comment type="similarity">
    <text evidence="1">Belongs to the shikimate dehydrogenase family.</text>
</comment>
<keyword id="KW-0028">Amino-acid biosynthesis</keyword>
<keyword id="KW-0057">Aromatic amino acid biosynthesis</keyword>
<keyword id="KW-0521">NADP</keyword>
<keyword id="KW-0560">Oxidoreductase</keyword>
<gene>
    <name evidence="1" type="primary">aroE</name>
    <name type="ordered locus">ECUMN_3755</name>
</gene>
<sequence length="272" mass="29409">METYAVFGNPIAHSKSPFIHQQFAQQLNIEHPYGRVLAPINDFINTLNAFFSAGGKGANVTVPFKEEAFARADELTERAALAGAVNTLKRLEDGRLLGDNTDGIGLLSDLERLSFIRPGLRILLIGAGGASRGVLLPLLSLDCAVTITNRTVSRAEELTKLFAHTGSIQALGMDELEGHEFDLIINATSSGISGDIPAIPSSLIHPGIYCYDMFYQKGKTPFLAWCEQRGSKRNADGLGMLVAQAAHAFLLWHGVLPDVEPVIKLLQQELSA</sequence>
<reference key="1">
    <citation type="journal article" date="2009" name="PLoS Genet.">
        <title>Organised genome dynamics in the Escherichia coli species results in highly diverse adaptive paths.</title>
        <authorList>
            <person name="Touchon M."/>
            <person name="Hoede C."/>
            <person name="Tenaillon O."/>
            <person name="Barbe V."/>
            <person name="Baeriswyl S."/>
            <person name="Bidet P."/>
            <person name="Bingen E."/>
            <person name="Bonacorsi S."/>
            <person name="Bouchier C."/>
            <person name="Bouvet O."/>
            <person name="Calteau A."/>
            <person name="Chiapello H."/>
            <person name="Clermont O."/>
            <person name="Cruveiller S."/>
            <person name="Danchin A."/>
            <person name="Diard M."/>
            <person name="Dossat C."/>
            <person name="Karoui M.E."/>
            <person name="Frapy E."/>
            <person name="Garry L."/>
            <person name="Ghigo J.M."/>
            <person name="Gilles A.M."/>
            <person name="Johnson J."/>
            <person name="Le Bouguenec C."/>
            <person name="Lescat M."/>
            <person name="Mangenot S."/>
            <person name="Martinez-Jehanne V."/>
            <person name="Matic I."/>
            <person name="Nassif X."/>
            <person name="Oztas S."/>
            <person name="Petit M.A."/>
            <person name="Pichon C."/>
            <person name="Rouy Z."/>
            <person name="Ruf C.S."/>
            <person name="Schneider D."/>
            <person name="Tourret J."/>
            <person name="Vacherie B."/>
            <person name="Vallenet D."/>
            <person name="Medigue C."/>
            <person name="Rocha E.P.C."/>
            <person name="Denamur E."/>
        </authorList>
    </citation>
    <scope>NUCLEOTIDE SEQUENCE [LARGE SCALE GENOMIC DNA]</scope>
    <source>
        <strain>UMN026 / ExPEC</strain>
    </source>
</reference>
<feature type="chain" id="PRO_1000118877" description="Shikimate dehydrogenase (NADP(+))">
    <location>
        <begin position="1"/>
        <end position="272"/>
    </location>
</feature>
<feature type="active site" description="Proton acceptor" evidence="1">
    <location>
        <position position="65"/>
    </location>
</feature>
<feature type="binding site" evidence="1">
    <location>
        <begin position="14"/>
        <end position="16"/>
    </location>
    <ligand>
        <name>shikimate</name>
        <dbReference type="ChEBI" id="CHEBI:36208"/>
    </ligand>
</feature>
<feature type="binding site" evidence="1">
    <location>
        <position position="61"/>
    </location>
    <ligand>
        <name>shikimate</name>
        <dbReference type="ChEBI" id="CHEBI:36208"/>
    </ligand>
</feature>
<feature type="binding site" evidence="1">
    <location>
        <position position="77"/>
    </location>
    <ligand>
        <name>NADP(+)</name>
        <dbReference type="ChEBI" id="CHEBI:58349"/>
    </ligand>
</feature>
<feature type="binding site" evidence="1">
    <location>
        <position position="86"/>
    </location>
    <ligand>
        <name>shikimate</name>
        <dbReference type="ChEBI" id="CHEBI:36208"/>
    </ligand>
</feature>
<feature type="binding site" evidence="1">
    <location>
        <position position="102"/>
    </location>
    <ligand>
        <name>shikimate</name>
        <dbReference type="ChEBI" id="CHEBI:36208"/>
    </ligand>
</feature>
<feature type="binding site" evidence="1">
    <location>
        <begin position="126"/>
        <end position="130"/>
    </location>
    <ligand>
        <name>NADP(+)</name>
        <dbReference type="ChEBI" id="CHEBI:58349"/>
    </ligand>
</feature>
<feature type="binding site" evidence="1">
    <location>
        <begin position="149"/>
        <end position="154"/>
    </location>
    <ligand>
        <name>NADP(+)</name>
        <dbReference type="ChEBI" id="CHEBI:58349"/>
    </ligand>
</feature>
<feature type="binding site" evidence="1">
    <location>
        <position position="213"/>
    </location>
    <ligand>
        <name>NADP(+)</name>
        <dbReference type="ChEBI" id="CHEBI:58349"/>
    </ligand>
</feature>
<feature type="binding site" evidence="1">
    <location>
        <position position="215"/>
    </location>
    <ligand>
        <name>shikimate</name>
        <dbReference type="ChEBI" id="CHEBI:36208"/>
    </ligand>
</feature>
<feature type="binding site" evidence="1">
    <location>
        <position position="237"/>
    </location>
    <ligand>
        <name>NADP(+)</name>
        <dbReference type="ChEBI" id="CHEBI:58349"/>
    </ligand>
</feature>
<proteinExistence type="inferred from homology"/>
<accession>B7NDQ3</accession>
<organism>
    <name type="scientific">Escherichia coli O17:K52:H18 (strain UMN026 / ExPEC)</name>
    <dbReference type="NCBI Taxonomy" id="585056"/>
    <lineage>
        <taxon>Bacteria</taxon>
        <taxon>Pseudomonadati</taxon>
        <taxon>Pseudomonadota</taxon>
        <taxon>Gammaproteobacteria</taxon>
        <taxon>Enterobacterales</taxon>
        <taxon>Enterobacteriaceae</taxon>
        <taxon>Escherichia</taxon>
    </lineage>
</organism>
<protein>
    <recommendedName>
        <fullName evidence="1">Shikimate dehydrogenase (NADP(+))</fullName>
        <shortName evidence="1">SDH</shortName>
        <ecNumber evidence="1">1.1.1.25</ecNumber>
    </recommendedName>
</protein>
<dbReference type="EC" id="1.1.1.25" evidence="1"/>
<dbReference type="EMBL" id="CU928163">
    <property type="protein sequence ID" value="CAR14903.1"/>
    <property type="molecule type" value="Genomic_DNA"/>
</dbReference>
<dbReference type="RefSeq" id="WP_000451230.1">
    <property type="nucleotide sequence ID" value="NC_011751.1"/>
</dbReference>
<dbReference type="RefSeq" id="YP_002414408.1">
    <property type="nucleotide sequence ID" value="NC_011751.1"/>
</dbReference>
<dbReference type="SMR" id="B7NDQ3"/>
<dbReference type="STRING" id="585056.ECUMN_3755"/>
<dbReference type="KEGG" id="eum:ECUMN_3755"/>
<dbReference type="PATRIC" id="fig|585056.7.peg.3930"/>
<dbReference type="HOGENOM" id="CLU_044063_2_1_6"/>
<dbReference type="UniPathway" id="UPA00053">
    <property type="reaction ID" value="UER00087"/>
</dbReference>
<dbReference type="Proteomes" id="UP000007097">
    <property type="component" value="Chromosome"/>
</dbReference>
<dbReference type="GO" id="GO:0005829">
    <property type="term" value="C:cytosol"/>
    <property type="evidence" value="ECO:0007669"/>
    <property type="project" value="TreeGrafter"/>
</dbReference>
<dbReference type="GO" id="GO:0050661">
    <property type="term" value="F:NADP binding"/>
    <property type="evidence" value="ECO:0007669"/>
    <property type="project" value="InterPro"/>
</dbReference>
<dbReference type="GO" id="GO:0004764">
    <property type="term" value="F:shikimate 3-dehydrogenase (NADP+) activity"/>
    <property type="evidence" value="ECO:0007669"/>
    <property type="project" value="UniProtKB-UniRule"/>
</dbReference>
<dbReference type="GO" id="GO:0008652">
    <property type="term" value="P:amino acid biosynthetic process"/>
    <property type="evidence" value="ECO:0007669"/>
    <property type="project" value="UniProtKB-KW"/>
</dbReference>
<dbReference type="GO" id="GO:0009073">
    <property type="term" value="P:aromatic amino acid family biosynthetic process"/>
    <property type="evidence" value="ECO:0007669"/>
    <property type="project" value="UniProtKB-KW"/>
</dbReference>
<dbReference type="GO" id="GO:0009423">
    <property type="term" value="P:chorismate biosynthetic process"/>
    <property type="evidence" value="ECO:0007669"/>
    <property type="project" value="UniProtKB-UniRule"/>
</dbReference>
<dbReference type="GO" id="GO:0019632">
    <property type="term" value="P:shikimate metabolic process"/>
    <property type="evidence" value="ECO:0007669"/>
    <property type="project" value="InterPro"/>
</dbReference>
<dbReference type="CDD" id="cd01065">
    <property type="entry name" value="NAD_bind_Shikimate_DH"/>
    <property type="match status" value="1"/>
</dbReference>
<dbReference type="FunFam" id="3.40.50.10860:FF:000006">
    <property type="entry name" value="Shikimate dehydrogenase (NADP(+))"/>
    <property type="match status" value="1"/>
</dbReference>
<dbReference type="FunFam" id="3.40.50.720:FF:000104">
    <property type="entry name" value="Shikimate dehydrogenase (NADP(+))"/>
    <property type="match status" value="1"/>
</dbReference>
<dbReference type="Gene3D" id="3.40.50.10860">
    <property type="entry name" value="Leucine Dehydrogenase, chain A, domain 1"/>
    <property type="match status" value="1"/>
</dbReference>
<dbReference type="Gene3D" id="3.40.50.720">
    <property type="entry name" value="NAD(P)-binding Rossmann-like Domain"/>
    <property type="match status" value="1"/>
</dbReference>
<dbReference type="HAMAP" id="MF_00222">
    <property type="entry name" value="Shikimate_DH_AroE"/>
    <property type="match status" value="1"/>
</dbReference>
<dbReference type="InterPro" id="IPR046346">
    <property type="entry name" value="Aminoacid_DH-like_N_sf"/>
</dbReference>
<dbReference type="InterPro" id="IPR036291">
    <property type="entry name" value="NAD(P)-bd_dom_sf"/>
</dbReference>
<dbReference type="InterPro" id="IPR041121">
    <property type="entry name" value="SDH_C"/>
</dbReference>
<dbReference type="InterPro" id="IPR011342">
    <property type="entry name" value="Shikimate_DH"/>
</dbReference>
<dbReference type="InterPro" id="IPR013708">
    <property type="entry name" value="Shikimate_DH-bd_N"/>
</dbReference>
<dbReference type="InterPro" id="IPR022893">
    <property type="entry name" value="Shikimate_DH_fam"/>
</dbReference>
<dbReference type="InterPro" id="IPR006151">
    <property type="entry name" value="Shikm_DH/Glu-tRNA_Rdtase"/>
</dbReference>
<dbReference type="NCBIfam" id="TIGR00507">
    <property type="entry name" value="aroE"/>
    <property type="match status" value="1"/>
</dbReference>
<dbReference type="NCBIfam" id="NF001310">
    <property type="entry name" value="PRK00258.1-2"/>
    <property type="match status" value="1"/>
</dbReference>
<dbReference type="PANTHER" id="PTHR21089:SF1">
    <property type="entry name" value="BIFUNCTIONAL 3-DEHYDROQUINATE DEHYDRATASE_SHIKIMATE DEHYDROGENASE, CHLOROPLASTIC"/>
    <property type="match status" value="1"/>
</dbReference>
<dbReference type="PANTHER" id="PTHR21089">
    <property type="entry name" value="SHIKIMATE DEHYDROGENASE"/>
    <property type="match status" value="1"/>
</dbReference>
<dbReference type="Pfam" id="PF18317">
    <property type="entry name" value="SDH_C"/>
    <property type="match status" value="1"/>
</dbReference>
<dbReference type="Pfam" id="PF01488">
    <property type="entry name" value="Shikimate_DH"/>
    <property type="match status" value="1"/>
</dbReference>
<dbReference type="Pfam" id="PF08501">
    <property type="entry name" value="Shikimate_dh_N"/>
    <property type="match status" value="1"/>
</dbReference>
<dbReference type="SUPFAM" id="SSF53223">
    <property type="entry name" value="Aminoacid dehydrogenase-like, N-terminal domain"/>
    <property type="match status" value="1"/>
</dbReference>
<dbReference type="SUPFAM" id="SSF51735">
    <property type="entry name" value="NAD(P)-binding Rossmann-fold domains"/>
    <property type="match status" value="1"/>
</dbReference>
<evidence type="ECO:0000255" key="1">
    <source>
        <dbReference type="HAMAP-Rule" id="MF_00222"/>
    </source>
</evidence>